<reference key="1">
    <citation type="journal article" date="2005" name="Science">
        <title>The transcriptional landscape of the mammalian genome.</title>
        <authorList>
            <person name="Carninci P."/>
            <person name="Kasukawa T."/>
            <person name="Katayama S."/>
            <person name="Gough J."/>
            <person name="Frith M.C."/>
            <person name="Maeda N."/>
            <person name="Oyama R."/>
            <person name="Ravasi T."/>
            <person name="Lenhard B."/>
            <person name="Wells C."/>
            <person name="Kodzius R."/>
            <person name="Shimokawa K."/>
            <person name="Bajic V.B."/>
            <person name="Brenner S.E."/>
            <person name="Batalov S."/>
            <person name="Forrest A.R."/>
            <person name="Zavolan M."/>
            <person name="Davis M.J."/>
            <person name="Wilming L.G."/>
            <person name="Aidinis V."/>
            <person name="Allen J.E."/>
            <person name="Ambesi-Impiombato A."/>
            <person name="Apweiler R."/>
            <person name="Aturaliya R.N."/>
            <person name="Bailey T.L."/>
            <person name="Bansal M."/>
            <person name="Baxter L."/>
            <person name="Beisel K.W."/>
            <person name="Bersano T."/>
            <person name="Bono H."/>
            <person name="Chalk A.M."/>
            <person name="Chiu K.P."/>
            <person name="Choudhary V."/>
            <person name="Christoffels A."/>
            <person name="Clutterbuck D.R."/>
            <person name="Crowe M.L."/>
            <person name="Dalla E."/>
            <person name="Dalrymple B.P."/>
            <person name="de Bono B."/>
            <person name="Della Gatta G."/>
            <person name="di Bernardo D."/>
            <person name="Down T."/>
            <person name="Engstrom P."/>
            <person name="Fagiolini M."/>
            <person name="Faulkner G."/>
            <person name="Fletcher C.F."/>
            <person name="Fukushima T."/>
            <person name="Furuno M."/>
            <person name="Futaki S."/>
            <person name="Gariboldi M."/>
            <person name="Georgii-Hemming P."/>
            <person name="Gingeras T.R."/>
            <person name="Gojobori T."/>
            <person name="Green R.E."/>
            <person name="Gustincich S."/>
            <person name="Harbers M."/>
            <person name="Hayashi Y."/>
            <person name="Hensch T.K."/>
            <person name="Hirokawa N."/>
            <person name="Hill D."/>
            <person name="Huminiecki L."/>
            <person name="Iacono M."/>
            <person name="Ikeo K."/>
            <person name="Iwama A."/>
            <person name="Ishikawa T."/>
            <person name="Jakt M."/>
            <person name="Kanapin A."/>
            <person name="Katoh M."/>
            <person name="Kawasawa Y."/>
            <person name="Kelso J."/>
            <person name="Kitamura H."/>
            <person name="Kitano H."/>
            <person name="Kollias G."/>
            <person name="Krishnan S.P."/>
            <person name="Kruger A."/>
            <person name="Kummerfeld S.K."/>
            <person name="Kurochkin I.V."/>
            <person name="Lareau L.F."/>
            <person name="Lazarevic D."/>
            <person name="Lipovich L."/>
            <person name="Liu J."/>
            <person name="Liuni S."/>
            <person name="McWilliam S."/>
            <person name="Madan Babu M."/>
            <person name="Madera M."/>
            <person name="Marchionni L."/>
            <person name="Matsuda H."/>
            <person name="Matsuzawa S."/>
            <person name="Miki H."/>
            <person name="Mignone F."/>
            <person name="Miyake S."/>
            <person name="Morris K."/>
            <person name="Mottagui-Tabar S."/>
            <person name="Mulder N."/>
            <person name="Nakano N."/>
            <person name="Nakauchi H."/>
            <person name="Ng P."/>
            <person name="Nilsson R."/>
            <person name="Nishiguchi S."/>
            <person name="Nishikawa S."/>
            <person name="Nori F."/>
            <person name="Ohara O."/>
            <person name="Okazaki Y."/>
            <person name="Orlando V."/>
            <person name="Pang K.C."/>
            <person name="Pavan W.J."/>
            <person name="Pavesi G."/>
            <person name="Pesole G."/>
            <person name="Petrovsky N."/>
            <person name="Piazza S."/>
            <person name="Reed J."/>
            <person name="Reid J.F."/>
            <person name="Ring B.Z."/>
            <person name="Ringwald M."/>
            <person name="Rost B."/>
            <person name="Ruan Y."/>
            <person name="Salzberg S.L."/>
            <person name="Sandelin A."/>
            <person name="Schneider C."/>
            <person name="Schoenbach C."/>
            <person name="Sekiguchi K."/>
            <person name="Semple C.A."/>
            <person name="Seno S."/>
            <person name="Sessa L."/>
            <person name="Sheng Y."/>
            <person name="Shibata Y."/>
            <person name="Shimada H."/>
            <person name="Shimada K."/>
            <person name="Silva D."/>
            <person name="Sinclair B."/>
            <person name="Sperling S."/>
            <person name="Stupka E."/>
            <person name="Sugiura K."/>
            <person name="Sultana R."/>
            <person name="Takenaka Y."/>
            <person name="Taki K."/>
            <person name="Tammoja K."/>
            <person name="Tan S.L."/>
            <person name="Tang S."/>
            <person name="Taylor M.S."/>
            <person name="Tegner J."/>
            <person name="Teichmann S.A."/>
            <person name="Ueda H.R."/>
            <person name="van Nimwegen E."/>
            <person name="Verardo R."/>
            <person name="Wei C.L."/>
            <person name="Yagi K."/>
            <person name="Yamanishi H."/>
            <person name="Zabarovsky E."/>
            <person name="Zhu S."/>
            <person name="Zimmer A."/>
            <person name="Hide W."/>
            <person name="Bult C."/>
            <person name="Grimmond S.M."/>
            <person name="Teasdale R.D."/>
            <person name="Liu E.T."/>
            <person name="Brusic V."/>
            <person name="Quackenbush J."/>
            <person name="Wahlestedt C."/>
            <person name="Mattick J.S."/>
            <person name="Hume D.A."/>
            <person name="Kai C."/>
            <person name="Sasaki D."/>
            <person name="Tomaru Y."/>
            <person name="Fukuda S."/>
            <person name="Kanamori-Katayama M."/>
            <person name="Suzuki M."/>
            <person name="Aoki J."/>
            <person name="Arakawa T."/>
            <person name="Iida J."/>
            <person name="Imamura K."/>
            <person name="Itoh M."/>
            <person name="Kato T."/>
            <person name="Kawaji H."/>
            <person name="Kawagashira N."/>
            <person name="Kawashima T."/>
            <person name="Kojima M."/>
            <person name="Kondo S."/>
            <person name="Konno H."/>
            <person name="Nakano K."/>
            <person name="Ninomiya N."/>
            <person name="Nishio T."/>
            <person name="Okada M."/>
            <person name="Plessy C."/>
            <person name="Shibata K."/>
            <person name="Shiraki T."/>
            <person name="Suzuki S."/>
            <person name="Tagami M."/>
            <person name="Waki K."/>
            <person name="Watahiki A."/>
            <person name="Okamura-Oho Y."/>
            <person name="Suzuki H."/>
            <person name="Kawai J."/>
            <person name="Hayashizaki Y."/>
        </authorList>
    </citation>
    <scope>NUCLEOTIDE SEQUENCE [LARGE SCALE MRNA] (ISOFORMS 2 AND 3)</scope>
    <source>
        <strain>C57BL/6J</strain>
        <tissue>Corpora quadrigemina</tissue>
        <tissue>Spinal ganglion</tissue>
    </source>
</reference>
<reference key="2">
    <citation type="journal article" date="2009" name="PLoS Biol.">
        <title>Lineage-specific biology revealed by a finished genome assembly of the mouse.</title>
        <authorList>
            <person name="Church D.M."/>
            <person name="Goodstadt L."/>
            <person name="Hillier L.W."/>
            <person name="Zody M.C."/>
            <person name="Goldstein S."/>
            <person name="She X."/>
            <person name="Bult C.J."/>
            <person name="Agarwala R."/>
            <person name="Cherry J.L."/>
            <person name="DiCuccio M."/>
            <person name="Hlavina W."/>
            <person name="Kapustin Y."/>
            <person name="Meric P."/>
            <person name="Maglott D."/>
            <person name="Birtle Z."/>
            <person name="Marques A.C."/>
            <person name="Graves T."/>
            <person name="Zhou S."/>
            <person name="Teague B."/>
            <person name="Potamousis K."/>
            <person name="Churas C."/>
            <person name="Place M."/>
            <person name="Herschleb J."/>
            <person name="Runnheim R."/>
            <person name="Forrest D."/>
            <person name="Amos-Landgraf J."/>
            <person name="Schwartz D.C."/>
            <person name="Cheng Z."/>
            <person name="Lindblad-Toh K."/>
            <person name="Eichler E.E."/>
            <person name="Ponting C.P."/>
        </authorList>
    </citation>
    <scope>NUCLEOTIDE SEQUENCE [LARGE SCALE GENOMIC DNA]</scope>
    <source>
        <strain>C57BL/6J</strain>
    </source>
</reference>
<reference key="3">
    <citation type="journal article" date="2004" name="Genome Res.">
        <title>The status, quality, and expansion of the NIH full-length cDNA project: the Mammalian Gene Collection (MGC).</title>
        <authorList>
            <consortium name="The MGC Project Team"/>
        </authorList>
    </citation>
    <scope>NUCLEOTIDE SEQUENCE [LARGE SCALE MRNA] OF 1067-1248 (ISOFORM 1)</scope>
</reference>
<organism>
    <name type="scientific">Mus musculus</name>
    <name type="common">Mouse</name>
    <dbReference type="NCBI Taxonomy" id="10090"/>
    <lineage>
        <taxon>Eukaryota</taxon>
        <taxon>Metazoa</taxon>
        <taxon>Chordata</taxon>
        <taxon>Craniata</taxon>
        <taxon>Vertebrata</taxon>
        <taxon>Euteleostomi</taxon>
        <taxon>Mammalia</taxon>
        <taxon>Eutheria</taxon>
        <taxon>Euarchontoglires</taxon>
        <taxon>Glires</taxon>
        <taxon>Rodentia</taxon>
        <taxon>Myomorpha</taxon>
        <taxon>Muroidea</taxon>
        <taxon>Muridae</taxon>
        <taxon>Murinae</taxon>
        <taxon>Mus</taxon>
        <taxon>Mus</taxon>
    </lineage>
</organism>
<evidence type="ECO:0000255" key="1">
    <source>
        <dbReference type="PROSITE-ProRule" id="PRU00801"/>
    </source>
</evidence>
<evidence type="ECO:0000256" key="2">
    <source>
        <dbReference type="SAM" id="MobiDB-lite"/>
    </source>
</evidence>
<evidence type="ECO:0000303" key="3">
    <source>
    </source>
</evidence>
<evidence type="ECO:0000305" key="4"/>
<feature type="chain" id="PRO_0000339303" description="von Willebrand factor A domain-containing protein 5B2">
    <location>
        <begin position="1"/>
        <end position="1248"/>
    </location>
</feature>
<feature type="domain" description="VIT" evidence="1">
    <location>
        <begin position="1"/>
        <end position="138"/>
    </location>
</feature>
<feature type="domain" description="VWFA">
    <location>
        <begin position="354"/>
        <end position="527"/>
    </location>
</feature>
<feature type="region of interest" description="Disordered" evidence="2">
    <location>
        <begin position="184"/>
        <end position="204"/>
    </location>
</feature>
<feature type="region of interest" description="Disordered" evidence="2">
    <location>
        <begin position="590"/>
        <end position="650"/>
    </location>
</feature>
<feature type="region of interest" description="Disordered" evidence="2">
    <location>
        <begin position="672"/>
        <end position="710"/>
    </location>
</feature>
<feature type="region of interest" description="Disordered" evidence="2">
    <location>
        <begin position="751"/>
        <end position="789"/>
    </location>
</feature>
<feature type="region of interest" description="Disordered" evidence="2">
    <location>
        <begin position="1008"/>
        <end position="1037"/>
    </location>
</feature>
<feature type="region of interest" description="Disordered" evidence="2">
    <location>
        <begin position="1126"/>
        <end position="1168"/>
    </location>
</feature>
<feature type="compositionally biased region" description="Polar residues" evidence="2">
    <location>
        <begin position="595"/>
        <end position="619"/>
    </location>
</feature>
<feature type="compositionally biased region" description="Low complexity" evidence="2">
    <location>
        <begin position="684"/>
        <end position="701"/>
    </location>
</feature>
<feature type="compositionally biased region" description="Low complexity" evidence="2">
    <location>
        <begin position="751"/>
        <end position="764"/>
    </location>
</feature>
<feature type="compositionally biased region" description="Low complexity" evidence="2">
    <location>
        <begin position="780"/>
        <end position="789"/>
    </location>
</feature>
<feature type="compositionally biased region" description="Low complexity" evidence="2">
    <location>
        <begin position="1127"/>
        <end position="1145"/>
    </location>
</feature>
<feature type="compositionally biased region" description="Basic and acidic residues" evidence="2">
    <location>
        <begin position="1159"/>
        <end position="1168"/>
    </location>
</feature>
<feature type="splice variant" id="VSP_034141" description="In isoform 3." evidence="3">
    <location>
        <begin position="1"/>
        <end position="944"/>
    </location>
</feature>
<feature type="splice variant" id="VSP_034144" description="In isoform 2." evidence="3">
    <original>GQEPGWQSLAGSVFPSPEEVLSATSPGTE</original>
    <variation>VGLGWGIPGGPGGRKSLYLTRSLSLLRIL</variation>
    <location>
        <begin position="574"/>
        <end position="602"/>
    </location>
</feature>
<feature type="splice variant" id="VSP_034145" description="In isoform 2." evidence="3">
    <location>
        <begin position="603"/>
        <end position="1248"/>
    </location>
</feature>
<feature type="splice variant" id="VSP_034146" description="In isoform 3." evidence="3">
    <original>VDATTREVLPGALQVWSSDPAELSGMSASQDQLAAAPLSTAVHSK</original>
    <variation>MSASQDQLAAAPLSTAVHSKGRAQMQWIGHRWALDHLLVLGDPTV</variation>
    <location>
        <begin position="945"/>
        <end position="989"/>
    </location>
</feature>
<keyword id="KW-0025">Alternative splicing</keyword>
<keyword id="KW-1185">Reference proteome</keyword>
<sequence length="1248" mass="133414">MPGLYCPTSWTPLPLTDSCVRAYAKGPCLSLRARLTYHNPQPQPVEGVFVYPLAEAEVVSGFEAEAAGRRVSFQLHSRRRSQAACCRALGPGLGTSTPRRCAQGHLVLNLAQARSTLVLPTGLVAAAGTMTVTLCSSRELPSRPDGVMHVALPTVFTPLAQPNLPGSPRSPGLCDDSPTSCFGVGSPEEERPTWEQPTATPDVFSGPARCPAPYTFSFEMLVTGPCLLAGLESPSHALRADALPHASSAATIRVTLAEGHQCDRALEILLHPSEPHQPHLMLETGSLSSAEYEAQVRARHDFQRLQQRDSGGERQVWFLQRRFHKDILLNPVLVLNFCPDLSSKPGHLNAATRELLFLLDGSGAGHKDAIVLAVKSLPAQTLVNLAIFGTLVQPLFPESRPCSDDTVQLICESIETLQTVNGPPDMLAVLDWALGQPQHRAYPRQMFLITAASPTAATTHQALEFMRWHRGAARCFSFALAPACRQLLHDLSVLSRGQAYFLRPGERLQPKLVQALRKALEPALSDISVDWFVPDAVEALLTPREIPALYPGDQLLGYCSLFRVDGFRSHALGGQEPGWQSLAGSVFPSPEEVLSATSPGTEPTHTTEPLGTGTVSAELSSPWAVGDSEQSMEALTDPVMDPGPNPSSDTAIWRRIFQSSYIREQYVLTHCSASPEPGPGSTCSSESPGSQGPGSPSGSRPLDPPSQQGCRSLAWVEPAGSRSCPLPVPPPSPFKVGAMSAEVLGRRQRAALAGRSLSSPSGRANPVPGRARHPSLDAIPDGLGPEPGQQLGQGLDDSGNLLSPAPLDWDMLMEPSFLFKPVPSSAESAPPAECLPPQAPRCHVVIRALCGEQPMCWEVGVGLEELWGPGDGSQPESLPMREAAWDQALHRLTAASVVQDNEQLALRGRAETRAEQGRVRRSWLRAIQTSKVSSAPSCFTCPVAVDATTREVLPGALQVWSSDPAELSGMSASQDQLAAAPLSTAVHSKGHQGGCSAGAWDLDLNDNSKSALGEPISPTGDHHGLPHQPPASSRLSLGRHRRLCSSNKGQTHENSNDGSNHDYLPLVRLQEAPGSFRLDEPFCAAVCIPQERLCRASPFAAHRASLSPTSASSPWAFLSPGIGQGDSATASCSQSPSSGSEGPGQVDSGRGSDTEASEGMERQDSSDLRGRTWATAVALAWLEHRCAAAFGEWELTASKADCWLRAQHLPDGLDLTALKAAARGLFLLLRHWDQNLQLHLLCYSPSNV</sequence>
<comment type="alternative products">
    <event type="alternative splicing"/>
    <isoform>
        <id>Q3UR50-1</id>
        <name>1</name>
        <sequence type="displayed"/>
    </isoform>
    <isoform>
        <id>Q3UR50-2</id>
        <name>2</name>
        <sequence type="described" ref="VSP_034144 VSP_034145"/>
    </isoform>
    <isoform>
        <id>Q3UR50-5</id>
        <name>3</name>
        <sequence type="described" ref="VSP_034141 VSP_034146"/>
    </isoform>
</comment>
<comment type="sequence caution" evidence="4">
    <conflict type="miscellaneous discrepancy">
        <sequence resource="EMBL-CDS" id="AAI10636"/>
    </conflict>
    <text>Probable cloning artifact.</text>
</comment>
<comment type="sequence caution" evidence="4">
    <conflict type="miscellaneous discrepancy">
        <sequence resource="EMBL-CDS" id="AAI25017"/>
    </conflict>
    <text>Probable cloning artifact.</text>
</comment>
<name>VW5B2_MOUSE</name>
<accession>Q3UR50</accession>
<accession>Q2TB01</accession>
<accession>Q80WS8</accession>
<accession>Q8BR57</accession>
<dbReference type="EMBL" id="AK045595">
    <property type="protein sequence ID" value="BAC32429.1"/>
    <property type="molecule type" value="mRNA"/>
</dbReference>
<dbReference type="EMBL" id="AK141799">
    <property type="protein sequence ID" value="BAE24838.1"/>
    <property type="molecule type" value="mRNA"/>
</dbReference>
<dbReference type="EMBL" id="AC087898">
    <property type="status" value="NOT_ANNOTATED_CDS"/>
    <property type="molecule type" value="Genomic_DNA"/>
</dbReference>
<dbReference type="EMBL" id="BC110635">
    <property type="protein sequence ID" value="AAI10636.1"/>
    <property type="status" value="ALT_SEQ"/>
    <property type="molecule type" value="mRNA"/>
</dbReference>
<dbReference type="EMBL" id="BC125016">
    <property type="protein sequence ID" value="AAI25017.1"/>
    <property type="status" value="ALT_SEQ"/>
    <property type="molecule type" value="mRNA"/>
</dbReference>
<dbReference type="CCDS" id="CCDS37288.1">
    <molecule id="Q3UR50-2"/>
</dbReference>
<dbReference type="CCDS" id="CCDS49792.1">
    <molecule id="Q3UR50-1"/>
</dbReference>
<dbReference type="RefSeq" id="NP_001138425.1">
    <molecule id="Q3UR50-1"/>
    <property type="nucleotide sequence ID" value="NM_001144953.1"/>
</dbReference>
<dbReference type="RefSeq" id="NP_872574.2">
    <molecule id="Q3UR50-2"/>
    <property type="nucleotide sequence ID" value="NM_182636.4"/>
</dbReference>
<dbReference type="RefSeq" id="XP_006522361.1">
    <property type="nucleotide sequence ID" value="XM_006522298.3"/>
</dbReference>
<dbReference type="FunCoup" id="Q3UR50">
    <property type="interactions" value="29"/>
</dbReference>
<dbReference type="STRING" id="10090.ENSMUSP00000093911"/>
<dbReference type="GlyGen" id="Q3UR50">
    <property type="glycosylation" value="1 site"/>
</dbReference>
<dbReference type="iPTMnet" id="Q3UR50"/>
<dbReference type="PhosphoSitePlus" id="Q3UR50"/>
<dbReference type="PaxDb" id="10090-ENSMUSP00000097652"/>
<dbReference type="ProteomicsDB" id="297830">
    <molecule id="Q3UR50-1"/>
</dbReference>
<dbReference type="ProteomicsDB" id="297831">
    <molecule id="Q3UR50-2"/>
</dbReference>
<dbReference type="ProteomicsDB" id="297832">
    <molecule id="Q3UR50-5"/>
</dbReference>
<dbReference type="Antibodypedia" id="52386">
    <property type="antibodies" value="49 antibodies from 9 providers"/>
</dbReference>
<dbReference type="Ensembl" id="ENSMUST00000096197.11">
    <molecule id="Q3UR50-1"/>
    <property type="protein sequence ID" value="ENSMUSP00000093911.5"/>
    <property type="gene ID" value="ENSMUSG00000046613.20"/>
</dbReference>
<dbReference type="Ensembl" id="ENSMUST00000100074.10">
    <molecule id="Q3UR50-2"/>
    <property type="protein sequence ID" value="ENSMUSP00000097652.4"/>
    <property type="gene ID" value="ENSMUSG00000046613.20"/>
</dbReference>
<dbReference type="GeneID" id="328643"/>
<dbReference type="KEGG" id="mmu:328643"/>
<dbReference type="UCSC" id="uc007yqb.1">
    <molecule id="Q3UR50-2"/>
    <property type="organism name" value="mouse"/>
</dbReference>
<dbReference type="UCSC" id="uc012acu.1">
    <molecule id="Q3UR50-1"/>
    <property type="organism name" value="mouse"/>
</dbReference>
<dbReference type="UCSC" id="uc029swo.1">
    <molecule id="Q3UR50-5"/>
    <property type="organism name" value="mouse"/>
</dbReference>
<dbReference type="AGR" id="MGI:2681859"/>
<dbReference type="CTD" id="90113"/>
<dbReference type="MGI" id="MGI:2681859">
    <property type="gene designation" value="Vwa5b2"/>
</dbReference>
<dbReference type="VEuPathDB" id="HostDB:ENSMUSG00000046613"/>
<dbReference type="eggNOG" id="ENOG502QW0V">
    <property type="taxonomic scope" value="Eukaryota"/>
</dbReference>
<dbReference type="GeneTree" id="ENSGT00940000157096"/>
<dbReference type="HOGENOM" id="CLU_389132_0_0_1"/>
<dbReference type="InParanoid" id="Q3UR50"/>
<dbReference type="OMA" id="IKICEMA"/>
<dbReference type="OrthoDB" id="1729737at2759"/>
<dbReference type="PhylomeDB" id="Q3UR50"/>
<dbReference type="BioGRID-ORCS" id="328643">
    <property type="hits" value="2 hits in 76 CRISPR screens"/>
</dbReference>
<dbReference type="ChiTaRS" id="Vwa5b2">
    <property type="organism name" value="mouse"/>
</dbReference>
<dbReference type="PRO" id="PR:Q3UR50"/>
<dbReference type="Proteomes" id="UP000000589">
    <property type="component" value="Chromosome 16"/>
</dbReference>
<dbReference type="RNAct" id="Q3UR50">
    <property type="molecule type" value="protein"/>
</dbReference>
<dbReference type="Bgee" id="ENSMUSG00000046613">
    <property type="expression patterns" value="Expressed in primary visual cortex and 115 other cell types or tissues"/>
</dbReference>
<dbReference type="ExpressionAtlas" id="Q3UR50">
    <property type="expression patterns" value="baseline and differential"/>
</dbReference>
<dbReference type="Gene3D" id="3.40.50.410">
    <property type="entry name" value="von Willebrand factor, type A domain"/>
    <property type="match status" value="1"/>
</dbReference>
<dbReference type="InterPro" id="IPR013694">
    <property type="entry name" value="VIT"/>
</dbReference>
<dbReference type="InterPro" id="IPR052627">
    <property type="entry name" value="VWA_domain-containing"/>
</dbReference>
<dbReference type="InterPro" id="IPR002035">
    <property type="entry name" value="VWF_A"/>
</dbReference>
<dbReference type="InterPro" id="IPR036465">
    <property type="entry name" value="vWFA_dom_sf"/>
</dbReference>
<dbReference type="PANTHER" id="PTHR46299:SF2">
    <property type="entry name" value="VON WILLEBRAND FACTOR A DOMAIN-CONTAINING PROTEIN 5B2"/>
    <property type="match status" value="1"/>
</dbReference>
<dbReference type="PANTHER" id="PTHR46299">
    <property type="entry name" value="VON WILLEBRAND FACTOR A DOMAIN-CONTAINING PROTEIN 5B2-RELATED"/>
    <property type="match status" value="1"/>
</dbReference>
<dbReference type="Pfam" id="PF13757">
    <property type="entry name" value="VIT_2"/>
    <property type="match status" value="1"/>
</dbReference>
<dbReference type="Pfam" id="PF13768">
    <property type="entry name" value="VWA_3"/>
    <property type="match status" value="1"/>
</dbReference>
<dbReference type="SUPFAM" id="SSF53300">
    <property type="entry name" value="vWA-like"/>
    <property type="match status" value="1"/>
</dbReference>
<dbReference type="PROSITE" id="PS51468">
    <property type="entry name" value="VIT"/>
    <property type="match status" value="1"/>
</dbReference>
<protein>
    <recommendedName>
        <fullName>von Willebrand factor A domain-containing protein 5B2</fullName>
    </recommendedName>
</protein>
<proteinExistence type="evidence at transcript level"/>
<gene>
    <name type="primary">Vwa5b2</name>
</gene>